<protein>
    <recommendedName>
        <fullName>Probable leaf thionin</fullName>
    </recommendedName>
</protein>
<name>THNX_HORVU</name>
<dbReference type="EMBL" id="AJ508712">
    <property type="protein sequence ID" value="CAD48489.1"/>
    <property type="molecule type" value="mRNA"/>
</dbReference>
<dbReference type="SMR" id="Q8H0Q5"/>
<dbReference type="ExpressionAtlas" id="Q8H0Q5">
    <property type="expression patterns" value="baseline and differential"/>
</dbReference>
<dbReference type="GO" id="GO:0005576">
    <property type="term" value="C:extracellular region"/>
    <property type="evidence" value="ECO:0007669"/>
    <property type="project" value="UniProtKB-SubCell"/>
</dbReference>
<dbReference type="GO" id="GO:0090729">
    <property type="term" value="F:toxin activity"/>
    <property type="evidence" value="ECO:0007669"/>
    <property type="project" value="UniProtKB-KW"/>
</dbReference>
<dbReference type="GO" id="GO:0006952">
    <property type="term" value="P:defense response"/>
    <property type="evidence" value="ECO:0007669"/>
    <property type="project" value="UniProtKB-KW"/>
</dbReference>
<dbReference type="FunFam" id="3.30.1350.10:FF:000001">
    <property type="entry name" value="Hellethionin-D"/>
    <property type="match status" value="1"/>
</dbReference>
<dbReference type="Gene3D" id="3.30.1350.10">
    <property type="entry name" value="Thionin-like"/>
    <property type="match status" value="1"/>
</dbReference>
<dbReference type="InterPro" id="IPR001010">
    <property type="entry name" value="Thionin"/>
</dbReference>
<dbReference type="InterPro" id="IPR036391">
    <property type="entry name" value="Thionin-like_sf"/>
</dbReference>
<dbReference type="PANTHER" id="PTHR33920">
    <property type="entry name" value="THIONIN-2.1-RELATED"/>
    <property type="match status" value="1"/>
</dbReference>
<dbReference type="PANTHER" id="PTHR33920:SF2">
    <property type="entry name" value="THIONIN-2.1-RELATED"/>
    <property type="match status" value="1"/>
</dbReference>
<dbReference type="Pfam" id="PF00321">
    <property type="entry name" value="Thionin"/>
    <property type="match status" value="1"/>
</dbReference>
<dbReference type="PRINTS" id="PR00287">
    <property type="entry name" value="THIONIN"/>
</dbReference>
<dbReference type="SUPFAM" id="SSF57429">
    <property type="entry name" value="Crambin-like"/>
    <property type="match status" value="1"/>
</dbReference>
<dbReference type="PROSITE" id="PS00271">
    <property type="entry name" value="THIONIN"/>
    <property type="match status" value="1"/>
</dbReference>
<accession>Q8H0Q5</accession>
<proteinExistence type="evidence at transcript level"/>
<reference key="1">
    <citation type="submission" date="2002-09" db="EMBL/GenBank/DDBJ databases">
        <title>ORF of a leaf expressed barley thionin.</title>
        <authorList>
            <person name="Kah B."/>
            <person name="Kogel K.H."/>
            <person name="Langen G."/>
        </authorList>
    </citation>
    <scope>NUCLEOTIDE SEQUENCE [MRNA]</scope>
    <source>
        <strain>cv. Manchuria</strain>
        <tissue>Leaf</tissue>
    </source>
</reference>
<evidence type="ECO:0000250" key="1">
    <source>
        <dbReference type="UniProtKB" id="P60057"/>
    </source>
</evidence>
<evidence type="ECO:0000255" key="2"/>
<evidence type="ECO:0000305" key="3"/>
<organism>
    <name type="scientific">Hordeum vulgare</name>
    <name type="common">Barley</name>
    <dbReference type="NCBI Taxonomy" id="4513"/>
    <lineage>
        <taxon>Eukaryota</taxon>
        <taxon>Viridiplantae</taxon>
        <taxon>Streptophyta</taxon>
        <taxon>Embryophyta</taxon>
        <taxon>Tracheophyta</taxon>
        <taxon>Spermatophyta</taxon>
        <taxon>Magnoliopsida</taxon>
        <taxon>Liliopsida</taxon>
        <taxon>Poales</taxon>
        <taxon>Poaceae</taxon>
        <taxon>BOP clade</taxon>
        <taxon>Pooideae</taxon>
        <taxon>Triticodae</taxon>
        <taxon>Triticeae</taxon>
        <taxon>Hordeinae</taxon>
        <taxon>Hordeum</taxon>
    </lineage>
</organism>
<comment type="function">
    <text>Thionins are small plant proteins which are toxic to animal cells. They seem to exert their toxic effect at the level of the cell membrane. Their precise function is not known.</text>
</comment>
<comment type="subcellular location">
    <subcellularLocation>
        <location evidence="3">Secreted</location>
    </subcellularLocation>
</comment>
<comment type="similarity">
    <text evidence="3">Belongs to the plant thionin (TC 1.C.44) family. 4 C-C subfamily.</text>
</comment>
<sequence>MATNKSIKSVVICVLILGLVLEQVQVEGKSCCKNTTGRNCYNACHFAGGSRPVCATACGCKIISGPTCPRDYPKLNLLPESGEPNATEYCTIGCRTSVCDNMDNVSRGQEMKFDMGLCSNACARFCNDGDVIQSVEA</sequence>
<keyword id="KW-1015">Disulfide bond</keyword>
<keyword id="KW-0611">Plant defense</keyword>
<keyword id="KW-0964">Secreted</keyword>
<keyword id="KW-0732">Signal</keyword>
<keyword id="KW-0800">Toxin</keyword>
<feature type="signal peptide" evidence="2">
    <location>
        <begin position="1"/>
        <end position="28"/>
    </location>
</feature>
<feature type="chain" id="PRO_0000034124" description="Probable leaf thionin">
    <location>
        <begin position="29"/>
        <end position="74"/>
    </location>
</feature>
<feature type="propeptide" id="PRO_0000459415" description="Acidic domain" evidence="3">
    <location>
        <begin position="75"/>
        <end position="137"/>
    </location>
</feature>
<feature type="disulfide bond" evidence="1">
    <location>
        <begin position="31"/>
        <end position="68"/>
    </location>
</feature>
<feature type="disulfide bond" evidence="1">
    <location>
        <begin position="32"/>
        <end position="60"/>
    </location>
</feature>
<feature type="disulfide bond" evidence="1">
    <location>
        <begin position="40"/>
        <end position="58"/>
    </location>
</feature>
<feature type="disulfide bond" evidence="1">
    <location>
        <begin position="44"/>
        <end position="54"/>
    </location>
</feature>